<name>H2B_CHAGB</name>
<organism>
    <name type="scientific">Chaetomium globosum (strain ATCC 6205 / CBS 148.51 / DSM 1962 / NBRC 6347 / NRRL 1970)</name>
    <name type="common">Soil fungus</name>
    <dbReference type="NCBI Taxonomy" id="306901"/>
    <lineage>
        <taxon>Eukaryota</taxon>
        <taxon>Fungi</taxon>
        <taxon>Dikarya</taxon>
        <taxon>Ascomycota</taxon>
        <taxon>Pezizomycotina</taxon>
        <taxon>Sordariomycetes</taxon>
        <taxon>Sordariomycetidae</taxon>
        <taxon>Sordariales</taxon>
        <taxon>Chaetomiaceae</taxon>
        <taxon>Chaetomium</taxon>
    </lineage>
</organism>
<keyword id="KW-0007">Acetylation</keyword>
<keyword id="KW-0158">Chromosome</keyword>
<keyword id="KW-0238">DNA-binding</keyword>
<keyword id="KW-1017">Isopeptide bond</keyword>
<keyword id="KW-0544">Nucleosome core</keyword>
<keyword id="KW-0539">Nucleus</keyword>
<keyword id="KW-0597">Phosphoprotein</keyword>
<keyword id="KW-1185">Reference proteome</keyword>
<keyword id="KW-0832">Ubl conjugation</keyword>
<gene>
    <name type="primary">HTB1</name>
    <name type="ORF">CHGG_00466</name>
</gene>
<sequence length="137" mass="14815">MAPKAADKKPASKAPATASKAPEKKDAGKKTAPSGDKKKRTKARKETYSSYIYKVLKQVHPDTGISNRAMSILNSFVNDIFERVATEASKLAAYNKKSTISSREIQTSVRLILPGELAKHAVSEGTKAVTKYSSSTK</sequence>
<proteinExistence type="inferred from homology"/>
<dbReference type="EMBL" id="CH408029">
    <property type="protein sequence ID" value="EAQ92231.1"/>
    <property type="molecule type" value="Genomic_DNA"/>
</dbReference>
<dbReference type="RefSeq" id="XP_001219687.1">
    <property type="nucleotide sequence ID" value="XM_001219686.1"/>
</dbReference>
<dbReference type="SMR" id="Q2HH38"/>
<dbReference type="FunCoup" id="Q2HH38">
    <property type="interactions" value="880"/>
</dbReference>
<dbReference type="STRING" id="306901.Q2HH38"/>
<dbReference type="GeneID" id="4388023"/>
<dbReference type="VEuPathDB" id="FungiDB:CHGG_00466"/>
<dbReference type="eggNOG" id="KOG1744">
    <property type="taxonomic scope" value="Eukaryota"/>
</dbReference>
<dbReference type="HOGENOM" id="CLU_075666_1_3_1"/>
<dbReference type="InParanoid" id="Q2HH38"/>
<dbReference type="OMA" id="RITIEAC"/>
<dbReference type="OrthoDB" id="10254238at2759"/>
<dbReference type="Proteomes" id="UP000001056">
    <property type="component" value="Unassembled WGS sequence"/>
</dbReference>
<dbReference type="GO" id="GO:0000786">
    <property type="term" value="C:nucleosome"/>
    <property type="evidence" value="ECO:0007669"/>
    <property type="project" value="UniProtKB-KW"/>
</dbReference>
<dbReference type="GO" id="GO:0005634">
    <property type="term" value="C:nucleus"/>
    <property type="evidence" value="ECO:0007669"/>
    <property type="project" value="UniProtKB-SubCell"/>
</dbReference>
<dbReference type="GO" id="GO:0003677">
    <property type="term" value="F:DNA binding"/>
    <property type="evidence" value="ECO:0007669"/>
    <property type="project" value="UniProtKB-KW"/>
</dbReference>
<dbReference type="GO" id="GO:0046982">
    <property type="term" value="F:protein heterodimerization activity"/>
    <property type="evidence" value="ECO:0007669"/>
    <property type="project" value="InterPro"/>
</dbReference>
<dbReference type="GO" id="GO:0030527">
    <property type="term" value="F:structural constituent of chromatin"/>
    <property type="evidence" value="ECO:0007669"/>
    <property type="project" value="InterPro"/>
</dbReference>
<dbReference type="CDD" id="cd22910">
    <property type="entry name" value="HFD_H2B"/>
    <property type="match status" value="1"/>
</dbReference>
<dbReference type="FunFam" id="1.10.20.10:FF:000014">
    <property type="entry name" value="Histone H2B"/>
    <property type="match status" value="1"/>
</dbReference>
<dbReference type="Gene3D" id="1.10.20.10">
    <property type="entry name" value="Histone, subunit A"/>
    <property type="match status" value="1"/>
</dbReference>
<dbReference type="InterPro" id="IPR009072">
    <property type="entry name" value="Histone-fold"/>
</dbReference>
<dbReference type="InterPro" id="IPR007125">
    <property type="entry name" value="Histone_H2A/H2B/H3"/>
</dbReference>
<dbReference type="InterPro" id="IPR000558">
    <property type="entry name" value="Histone_H2B"/>
</dbReference>
<dbReference type="InterPro" id="IPR055333">
    <property type="entry name" value="HISTONE_H2B_site"/>
</dbReference>
<dbReference type="PANTHER" id="PTHR23428">
    <property type="entry name" value="HISTONE H2B"/>
    <property type="match status" value="1"/>
</dbReference>
<dbReference type="Pfam" id="PF00125">
    <property type="entry name" value="Histone"/>
    <property type="match status" value="1"/>
</dbReference>
<dbReference type="PRINTS" id="PR00621">
    <property type="entry name" value="HISTONEH2B"/>
</dbReference>
<dbReference type="SMART" id="SM00427">
    <property type="entry name" value="H2B"/>
    <property type="match status" value="1"/>
</dbReference>
<dbReference type="SUPFAM" id="SSF47113">
    <property type="entry name" value="Histone-fold"/>
    <property type="match status" value="1"/>
</dbReference>
<dbReference type="PROSITE" id="PS00357">
    <property type="entry name" value="HISTONE_H2B"/>
    <property type="match status" value="1"/>
</dbReference>
<protein>
    <recommendedName>
        <fullName>Histone H2B</fullName>
    </recommendedName>
</protein>
<accession>Q2HH38</accession>
<feature type="initiator methionine" description="Removed" evidence="1">
    <location>
        <position position="1"/>
    </location>
</feature>
<feature type="chain" id="PRO_0000245293" description="Histone H2B">
    <location>
        <begin position="2"/>
        <end position="137"/>
    </location>
</feature>
<feature type="region of interest" description="Disordered" evidence="2">
    <location>
        <begin position="1"/>
        <end position="45"/>
    </location>
</feature>
<feature type="compositionally biased region" description="Basic and acidic residues" evidence="2">
    <location>
        <begin position="1"/>
        <end position="10"/>
    </location>
</feature>
<feature type="modified residue" description="N6-acetyllysine; alternate" evidence="1">
    <location>
        <position position="8"/>
    </location>
</feature>
<feature type="modified residue" description="N6-acetyllysine; alternate" evidence="1">
    <location>
        <position position="9"/>
    </location>
</feature>
<feature type="modified residue" description="Phosphoserine" evidence="1">
    <location>
        <position position="12"/>
    </location>
</feature>
<feature type="modified residue" description="N6-acetyllysine" evidence="1">
    <location>
        <position position="13"/>
    </location>
</feature>
<feature type="modified residue" description="N6-acetyllysine; alternate" evidence="1">
    <location>
        <position position="24"/>
    </location>
</feature>
<feature type="cross-link" description="Glycyl lysine isopeptide (Lys-Gly) (interchain with G-Cter in SUMO); alternate" evidence="1">
    <location>
        <position position="8"/>
    </location>
</feature>
<feature type="cross-link" description="Glycyl lysine isopeptide (Lys-Gly) (interchain with G-Cter in SUMO); alternate" evidence="1">
    <location>
        <position position="9"/>
    </location>
</feature>
<feature type="cross-link" description="Glycyl lysine isopeptide (Lys-Gly) (interchain with G-Cter in SUMO); alternate" evidence="1">
    <location>
        <position position="24"/>
    </location>
</feature>
<feature type="cross-link" description="Glycyl lysine isopeptide (Lys-Gly) (interchain with G-Cter in SUMO)" evidence="1">
    <location>
        <position position="25"/>
    </location>
</feature>
<feature type="cross-link" description="Glycyl lysine isopeptide (Lys-Gly) (interchain with G-Cter in ubiquitin)" evidence="1">
    <location>
        <position position="131"/>
    </location>
</feature>
<reference key="1">
    <citation type="journal article" date="2015" name="Genome Announc.">
        <title>Draft genome sequence of the cellulolytic fungus Chaetomium globosum.</title>
        <authorList>
            <person name="Cuomo C.A."/>
            <person name="Untereiner W.A."/>
            <person name="Ma L.-J."/>
            <person name="Grabherr M."/>
            <person name="Birren B.W."/>
        </authorList>
    </citation>
    <scope>NUCLEOTIDE SEQUENCE [LARGE SCALE GENOMIC DNA]</scope>
    <source>
        <strain>ATCC 6205 / CBS 148.51 / DSM 1962 / NBRC 6347 / NRRL 1970</strain>
    </source>
</reference>
<comment type="function">
    <text>Core component of nucleosome. Nucleosomes wrap and compact DNA into chromatin, limiting DNA accessibility to the cellular machineries which require DNA as a template. Histones thereby play a central role in transcription regulation, DNA repair, DNA replication and chromosomal stability. DNA accessibility is regulated via a complex set of post-translational modifications of histones, also called histone code, and nucleosome remodeling.</text>
</comment>
<comment type="subunit">
    <text>The nucleosome is a histone octamer containing two molecules each of H2A, H2B, H3 and H4 assembled in one H3-H4 heterotetramer and two H2A-H2B heterodimers. The octamer wraps approximately 147 bp of DNA.</text>
</comment>
<comment type="subcellular location">
    <subcellularLocation>
        <location>Nucleus</location>
    </subcellularLocation>
    <subcellularLocation>
        <location>Chromosome</location>
    </subcellularLocation>
</comment>
<comment type="PTM">
    <text evidence="1">Monoubiquitinated by the UBC2-BRE1 complex to form H2BK123ub1. H2BK123ub1 gives a specific tag for epigenetic transcriptional activation and is also prerequisite for H3K4me and H3K79me formation. H2BK123ub1 also modulates the formation of double-strand breaks during meiosis and is a prerequisite for DNA-damage checkpoint activation (By similarity).</text>
</comment>
<comment type="PTM">
    <text evidence="1">Phosphorylated to form H2BS10ph during progression through meiotic prophase. May be correlated with chromosome condensation (By similarity).</text>
</comment>
<comment type="PTM">
    <text evidence="1">Acetylated by GCN5 to form H2BK11ac and H2BK16ac. H2BK16ac can also be formed by ESA1. Acetylation of N-terminal lysines and particularly formation of H2BK11acK16ac has a positive effect on transcription (By similarity).</text>
</comment>
<comment type="PTM">
    <text evidence="1">Sumoylation to form H2BK6su or H2BK7su, and probably also H2BK16su or H2BK17su, occurs preferentially near the telomeres and represses gene transcription.</text>
</comment>
<comment type="similarity">
    <text evidence="3">Belongs to the histone H2B family.</text>
</comment>
<comment type="caution">
    <text evidence="3">To ensure consistency between histone entries, we follow the 'Brno' nomenclature for histone modifications, with positions referring to those used in the literature for the 'closest' model organism. Due to slight variations in histone sequences between organisms and to the presence of initiator methionine in UniProtKB/Swiss-Prot sequences, the actual positions of modified amino acids in the sequence generally differ. In this entry the following conventions are used: H2BK6ac = acetylated Lys-8; H2BK6su = sumoylated Lys-8; H2BK7ac = acetylated Lys-9; H2BK7su = sumoylated Lys-9; H2BS10ph = phosphorylated Ser-12; H2BK11ac = acetylated Lys-13; H2BK16ac = acetylated Lys-24; H2BK16su = sumoylated Lys-24; H2BK17su = sumoylated Lys-25; H2BK123ub1 = monoubiquitinated Lys-131.</text>
</comment>
<evidence type="ECO:0000250" key="1"/>
<evidence type="ECO:0000256" key="2">
    <source>
        <dbReference type="SAM" id="MobiDB-lite"/>
    </source>
</evidence>
<evidence type="ECO:0000305" key="3"/>